<comment type="function">
    <text evidence="4">Required for endocytosis and endosomal pH regulation.</text>
</comment>
<comment type="subcellular location">
    <subcellularLocation>
        <location evidence="4">Endosome membrane</location>
        <topology evidence="4">Multi-pass membrane protein</topology>
    </subcellularLocation>
    <text>Associated with the endosome/lysosome system.</text>
</comment>
<comment type="developmental stage">
    <text evidence="4">Present at low levels in vegetative cells, peaks at roughly 5 hours and decrease by 10 hours. There is another peak of production at 12.5 hours, and a slight increase beginning at 20 hours (at protein level).</text>
</comment>
<comment type="disruption phenotype">
    <text evidence="4">Cells that have a abcG2-abcG18 disruption have an endocytosis rate roughly 70% that of wild-type (or rtoA disrupted cells). Disruption on abcG2-abcG18-rtoA cells have an endocytosis rate roughly 20% that of wild-type. The exocytosis rates of abcG2-abcG18 and abcG2-abcG18-rtoA disrupted cells are roughly that of wild-type; abcG2-abcG18 endosomes have an unusually high pH, whereas abcG2-abcG18-rtoA endosomes have an almost normal pH.</text>
</comment>
<comment type="similarity">
    <text evidence="5">Belongs to the ABC transporter superfamily. ABCG family. PDR (TC 3.A.1.205) subfamily.</text>
</comment>
<gene>
    <name type="primary">abcG2</name>
    <name type="synonym">mdra1</name>
    <name type="ORF">DDB_G0275689</name>
</gene>
<evidence type="ECO:0000255" key="1"/>
<evidence type="ECO:0000255" key="2">
    <source>
        <dbReference type="PROSITE-ProRule" id="PRU00434"/>
    </source>
</evidence>
<evidence type="ECO:0000256" key="3">
    <source>
        <dbReference type="SAM" id="MobiDB-lite"/>
    </source>
</evidence>
<evidence type="ECO:0000269" key="4">
    <source>
    </source>
</evidence>
<evidence type="ECO:0000305" key="5"/>
<organism>
    <name type="scientific">Dictyostelium discoideum</name>
    <name type="common">Social amoeba</name>
    <dbReference type="NCBI Taxonomy" id="44689"/>
    <lineage>
        <taxon>Eukaryota</taxon>
        <taxon>Amoebozoa</taxon>
        <taxon>Evosea</taxon>
        <taxon>Eumycetozoa</taxon>
        <taxon>Dictyostelia</taxon>
        <taxon>Dictyosteliales</taxon>
        <taxon>Dictyosteliaceae</taxon>
        <taxon>Dictyostelium</taxon>
    </lineage>
</organism>
<keyword id="KW-0067">ATP-binding</keyword>
<keyword id="KW-0254">Endocytosis</keyword>
<keyword id="KW-0967">Endosome</keyword>
<keyword id="KW-0472">Membrane</keyword>
<keyword id="KW-0547">Nucleotide-binding</keyword>
<keyword id="KW-1185">Reference proteome</keyword>
<keyword id="KW-0677">Repeat</keyword>
<keyword id="KW-0812">Transmembrane</keyword>
<keyword id="KW-1133">Transmembrane helix</keyword>
<keyword id="KW-0813">Transport</keyword>
<dbReference type="EMBL" id="AF246689">
    <property type="protein sequence ID" value="AAF72517.2"/>
    <property type="molecule type" value="Genomic_DNA"/>
</dbReference>
<dbReference type="EMBL" id="AF482381">
    <property type="protein sequence ID" value="AAL91486.1"/>
    <property type="molecule type" value="Genomic_DNA"/>
</dbReference>
<dbReference type="EMBL" id="AAFI02000013">
    <property type="protein sequence ID" value="EAL69595.1"/>
    <property type="molecule type" value="Genomic_DNA"/>
</dbReference>
<dbReference type="RefSeq" id="XP_643503.1">
    <property type="nucleotide sequence ID" value="XM_638411.1"/>
</dbReference>
<dbReference type="SMR" id="Q9NGP5"/>
<dbReference type="FunCoup" id="Q9NGP5">
    <property type="interactions" value="6"/>
</dbReference>
<dbReference type="STRING" id="44689.Q9NGP5"/>
<dbReference type="PaxDb" id="44689-DDB0191229"/>
<dbReference type="EnsemblProtists" id="EAL69595">
    <property type="protein sequence ID" value="EAL69595"/>
    <property type="gene ID" value="DDB_G0275689"/>
</dbReference>
<dbReference type="GeneID" id="8620084"/>
<dbReference type="KEGG" id="ddi:DDB_G0275689"/>
<dbReference type="dictyBase" id="DDB_G0275689">
    <property type="gene designation" value="abcG2"/>
</dbReference>
<dbReference type="VEuPathDB" id="AmoebaDB:DDB_G0275689"/>
<dbReference type="eggNOG" id="KOG0065">
    <property type="taxonomic scope" value="Eukaryota"/>
</dbReference>
<dbReference type="HOGENOM" id="CLU_000604_35_3_1"/>
<dbReference type="InParanoid" id="Q9NGP5"/>
<dbReference type="OMA" id="QYWSDQS"/>
<dbReference type="PhylomeDB" id="Q9NGP5"/>
<dbReference type="PRO" id="PR:Q9NGP5"/>
<dbReference type="Proteomes" id="UP000002195">
    <property type="component" value="Chromosome 2"/>
</dbReference>
<dbReference type="GO" id="GO:0005768">
    <property type="term" value="C:endosome"/>
    <property type="evidence" value="ECO:0000314"/>
    <property type="project" value="dictyBase"/>
</dbReference>
<dbReference type="GO" id="GO:0010008">
    <property type="term" value="C:endosome membrane"/>
    <property type="evidence" value="ECO:0007669"/>
    <property type="project" value="UniProtKB-SubCell"/>
</dbReference>
<dbReference type="GO" id="GO:0016020">
    <property type="term" value="C:membrane"/>
    <property type="evidence" value="ECO:0000317"/>
    <property type="project" value="dictyBase"/>
</dbReference>
<dbReference type="GO" id="GO:0140359">
    <property type="term" value="F:ABC-type transporter activity"/>
    <property type="evidence" value="ECO:0007669"/>
    <property type="project" value="InterPro"/>
</dbReference>
<dbReference type="GO" id="GO:0005524">
    <property type="term" value="F:ATP binding"/>
    <property type="evidence" value="ECO:0007669"/>
    <property type="project" value="UniProtKB-KW"/>
</dbReference>
<dbReference type="GO" id="GO:0016887">
    <property type="term" value="F:ATP hydrolysis activity"/>
    <property type="evidence" value="ECO:0007669"/>
    <property type="project" value="InterPro"/>
</dbReference>
<dbReference type="GO" id="GO:0042626">
    <property type="term" value="F:ATPase-coupled transmembrane transporter activity"/>
    <property type="evidence" value="ECO:0000317"/>
    <property type="project" value="dictyBase"/>
</dbReference>
<dbReference type="GO" id="GO:0031152">
    <property type="term" value="P:aggregation involved in sorocarp development"/>
    <property type="evidence" value="ECO:0000315"/>
    <property type="project" value="dictyBase"/>
</dbReference>
<dbReference type="GO" id="GO:0030154">
    <property type="term" value="P:cell differentiation"/>
    <property type="evidence" value="ECO:0000316"/>
    <property type="project" value="dictyBase"/>
</dbReference>
<dbReference type="GO" id="GO:0006897">
    <property type="term" value="P:endocytosis"/>
    <property type="evidence" value="ECO:0000316"/>
    <property type="project" value="dictyBase"/>
</dbReference>
<dbReference type="GO" id="GO:0048388">
    <property type="term" value="P:endosomal lumen acidification"/>
    <property type="evidence" value="ECO:0000316"/>
    <property type="project" value="dictyBase"/>
</dbReference>
<dbReference type="GO" id="GO:0031288">
    <property type="term" value="P:sorocarp morphogenesis"/>
    <property type="evidence" value="ECO:0000315"/>
    <property type="project" value="dictyBase"/>
</dbReference>
<dbReference type="CDD" id="cd03232">
    <property type="entry name" value="ABCG_PDR_domain2"/>
    <property type="match status" value="1"/>
</dbReference>
<dbReference type="FunFam" id="3.40.50.300:FF:000054">
    <property type="entry name" value="ABC multidrug transporter atrF"/>
    <property type="match status" value="1"/>
</dbReference>
<dbReference type="FunFam" id="3.40.50.300:FF:002639">
    <property type="entry name" value="ABC transporter G family protein"/>
    <property type="match status" value="1"/>
</dbReference>
<dbReference type="Gene3D" id="3.40.50.300">
    <property type="entry name" value="P-loop containing nucleotide triphosphate hydrolases"/>
    <property type="match status" value="2"/>
</dbReference>
<dbReference type="InterPro" id="IPR003593">
    <property type="entry name" value="AAA+_ATPase"/>
</dbReference>
<dbReference type="InterPro" id="IPR013525">
    <property type="entry name" value="ABC2_TM"/>
</dbReference>
<dbReference type="InterPro" id="IPR003439">
    <property type="entry name" value="ABC_transporter-like_ATP-bd"/>
</dbReference>
<dbReference type="InterPro" id="IPR017871">
    <property type="entry name" value="ABC_transporter-like_CS"/>
</dbReference>
<dbReference type="InterPro" id="IPR043926">
    <property type="entry name" value="ABCG_dom"/>
</dbReference>
<dbReference type="InterPro" id="IPR034003">
    <property type="entry name" value="ABCG_PDR_2"/>
</dbReference>
<dbReference type="InterPro" id="IPR027417">
    <property type="entry name" value="P-loop_NTPase"/>
</dbReference>
<dbReference type="PANTHER" id="PTHR19241">
    <property type="entry name" value="ATP-BINDING CASSETTE TRANSPORTER"/>
    <property type="match status" value="1"/>
</dbReference>
<dbReference type="Pfam" id="PF01061">
    <property type="entry name" value="ABC2_membrane"/>
    <property type="match status" value="2"/>
</dbReference>
<dbReference type="Pfam" id="PF19055">
    <property type="entry name" value="ABC2_membrane_7"/>
    <property type="match status" value="2"/>
</dbReference>
<dbReference type="Pfam" id="PF00005">
    <property type="entry name" value="ABC_tran"/>
    <property type="match status" value="2"/>
</dbReference>
<dbReference type="SMART" id="SM00382">
    <property type="entry name" value="AAA"/>
    <property type="match status" value="2"/>
</dbReference>
<dbReference type="SUPFAM" id="SSF52540">
    <property type="entry name" value="P-loop containing nucleoside triphosphate hydrolases"/>
    <property type="match status" value="2"/>
</dbReference>
<dbReference type="PROSITE" id="PS00211">
    <property type="entry name" value="ABC_TRANSPORTER_1"/>
    <property type="match status" value="1"/>
</dbReference>
<dbReference type="PROSITE" id="PS50893">
    <property type="entry name" value="ABC_TRANSPORTER_2"/>
    <property type="match status" value="2"/>
</dbReference>
<name>ABCG2_DICDI</name>
<reference key="1">
    <citation type="journal article" date="2001" name="J. Cell Sci.">
        <title>ABC transporters required for endocytosis and endosomal pH regulation in Dictyostelium.</title>
        <authorList>
            <person name="Brazill D.T."/>
            <person name="Meyer L.R."/>
            <person name="Hatton R.D."/>
            <person name="Brock D.A."/>
            <person name="Gomer R.H."/>
        </authorList>
    </citation>
    <scope>NUCLEOTIDE SEQUENCE [GENOMIC DNA]</scope>
    <scope>FUNCTION</scope>
    <scope>DISRUPTION PHENOTYPE</scope>
    <scope>DEVELOPMENTAL STAGE</scope>
    <scope>SUBCELLULAR LOCATION</scope>
</reference>
<reference key="2">
    <citation type="journal article" date="2002" name="Eukaryot. Cell">
        <title>Evolutionary analyses of ABC transporters of Dictyostelium discoideum.</title>
        <authorList>
            <person name="Anjard C."/>
            <person name="Loomis W.F."/>
        </authorList>
    </citation>
    <scope>NUCLEOTIDE SEQUENCE [GENOMIC DNA]</scope>
    <scope>NOMENCLATURE</scope>
    <source>
        <strain>AX4</strain>
    </source>
</reference>
<reference key="3">
    <citation type="journal article" date="2002" name="Nature">
        <title>Sequence and analysis of chromosome 2 of Dictyostelium discoideum.</title>
        <authorList>
            <person name="Gloeckner G."/>
            <person name="Eichinger L."/>
            <person name="Szafranski K."/>
            <person name="Pachebat J.A."/>
            <person name="Bankier A.T."/>
            <person name="Dear P.H."/>
            <person name="Lehmann R."/>
            <person name="Baumgart C."/>
            <person name="Parra G."/>
            <person name="Abril J.F."/>
            <person name="Guigo R."/>
            <person name="Kumpf K."/>
            <person name="Tunggal B."/>
            <person name="Cox E.C."/>
            <person name="Quail M.A."/>
            <person name="Platzer M."/>
            <person name="Rosenthal A."/>
            <person name="Noegel A.A."/>
        </authorList>
    </citation>
    <scope>NUCLEOTIDE SEQUENCE [LARGE SCALE GENOMIC DNA]</scope>
    <source>
        <strain>AX4</strain>
    </source>
</reference>
<reference key="4">
    <citation type="journal article" date="2005" name="Nature">
        <title>The genome of the social amoeba Dictyostelium discoideum.</title>
        <authorList>
            <person name="Eichinger L."/>
            <person name="Pachebat J.A."/>
            <person name="Gloeckner G."/>
            <person name="Rajandream M.A."/>
            <person name="Sucgang R."/>
            <person name="Berriman M."/>
            <person name="Song J."/>
            <person name="Olsen R."/>
            <person name="Szafranski K."/>
            <person name="Xu Q."/>
            <person name="Tunggal B."/>
            <person name="Kummerfeld S."/>
            <person name="Madera M."/>
            <person name="Konfortov B.A."/>
            <person name="Rivero F."/>
            <person name="Bankier A.T."/>
            <person name="Lehmann R."/>
            <person name="Hamlin N."/>
            <person name="Davies R."/>
            <person name="Gaudet P."/>
            <person name="Fey P."/>
            <person name="Pilcher K."/>
            <person name="Chen G."/>
            <person name="Saunders D."/>
            <person name="Sodergren E.J."/>
            <person name="Davis P."/>
            <person name="Kerhornou A."/>
            <person name="Nie X."/>
            <person name="Hall N."/>
            <person name="Anjard C."/>
            <person name="Hemphill L."/>
            <person name="Bason N."/>
            <person name="Farbrother P."/>
            <person name="Desany B."/>
            <person name="Just E."/>
            <person name="Morio T."/>
            <person name="Rost R."/>
            <person name="Churcher C.M."/>
            <person name="Cooper J."/>
            <person name="Haydock S."/>
            <person name="van Driessche N."/>
            <person name="Cronin A."/>
            <person name="Goodhead I."/>
            <person name="Muzny D.M."/>
            <person name="Mourier T."/>
            <person name="Pain A."/>
            <person name="Lu M."/>
            <person name="Harper D."/>
            <person name="Lindsay R."/>
            <person name="Hauser H."/>
            <person name="James K.D."/>
            <person name="Quiles M."/>
            <person name="Madan Babu M."/>
            <person name="Saito T."/>
            <person name="Buchrieser C."/>
            <person name="Wardroper A."/>
            <person name="Felder M."/>
            <person name="Thangavelu M."/>
            <person name="Johnson D."/>
            <person name="Knights A."/>
            <person name="Loulseged H."/>
            <person name="Mungall K.L."/>
            <person name="Oliver K."/>
            <person name="Price C."/>
            <person name="Quail M.A."/>
            <person name="Urushihara H."/>
            <person name="Hernandez J."/>
            <person name="Rabbinowitsch E."/>
            <person name="Steffen D."/>
            <person name="Sanders M."/>
            <person name="Ma J."/>
            <person name="Kohara Y."/>
            <person name="Sharp S."/>
            <person name="Simmonds M.N."/>
            <person name="Spiegler S."/>
            <person name="Tivey A."/>
            <person name="Sugano S."/>
            <person name="White B."/>
            <person name="Walker D."/>
            <person name="Woodward J.R."/>
            <person name="Winckler T."/>
            <person name="Tanaka Y."/>
            <person name="Shaulsky G."/>
            <person name="Schleicher M."/>
            <person name="Weinstock G.M."/>
            <person name="Rosenthal A."/>
            <person name="Cox E.C."/>
            <person name="Chisholm R.L."/>
            <person name="Gibbs R.A."/>
            <person name="Loomis W.F."/>
            <person name="Platzer M."/>
            <person name="Kay R.R."/>
            <person name="Williams J.G."/>
            <person name="Dear P.H."/>
            <person name="Noegel A.A."/>
            <person name="Barrell B.G."/>
            <person name="Kuspa A."/>
        </authorList>
    </citation>
    <scope>NUCLEOTIDE SEQUENCE [LARGE SCALE GENOMIC DNA]</scope>
    <source>
        <strain>AX4</strain>
    </source>
</reference>
<proteinExistence type="evidence at protein level"/>
<feature type="chain" id="PRO_0000391391" description="ABC transporter G family member 2">
    <location>
        <begin position="1"/>
        <end position="1328"/>
    </location>
</feature>
<feature type="transmembrane region" description="Helical" evidence="1">
    <location>
        <begin position="398"/>
        <end position="418"/>
    </location>
</feature>
<feature type="transmembrane region" description="Helical" evidence="1">
    <location>
        <begin position="428"/>
        <end position="448"/>
    </location>
</feature>
<feature type="transmembrane region" description="Helical" evidence="1">
    <location>
        <begin position="477"/>
        <end position="497"/>
    </location>
</feature>
<feature type="transmembrane region" description="Helical" evidence="1">
    <location>
        <begin position="504"/>
        <end position="524"/>
    </location>
</feature>
<feature type="transmembrane region" description="Helical" evidence="1">
    <location>
        <begin position="534"/>
        <end position="554"/>
    </location>
</feature>
<feature type="transmembrane region" description="Helical" evidence="1">
    <location>
        <begin position="559"/>
        <end position="579"/>
    </location>
</feature>
<feature type="transmembrane region" description="Helical" evidence="1">
    <location>
        <begin position="642"/>
        <end position="662"/>
    </location>
</feature>
<feature type="transmembrane region" description="Helical" evidence="1">
    <location>
        <begin position="1059"/>
        <end position="1076"/>
    </location>
</feature>
<feature type="transmembrane region" description="Helical" evidence="1">
    <location>
        <begin position="1087"/>
        <end position="1107"/>
    </location>
</feature>
<feature type="transmembrane region" description="Helical" evidence="1">
    <location>
        <begin position="1128"/>
        <end position="1148"/>
    </location>
</feature>
<feature type="transmembrane region" description="Helical" evidence="1">
    <location>
        <begin position="1172"/>
        <end position="1192"/>
    </location>
</feature>
<feature type="transmembrane region" description="Helical" evidence="1">
    <location>
        <begin position="1197"/>
        <end position="1217"/>
    </location>
</feature>
<feature type="transmembrane region" description="Helical" evidence="1">
    <location>
        <begin position="1303"/>
        <end position="1323"/>
    </location>
</feature>
<feature type="domain" description="ABC transporter 1" evidence="2">
    <location>
        <begin position="53"/>
        <end position="299"/>
    </location>
</feature>
<feature type="domain" description="ABC transmembrane type-2 1">
    <location>
        <begin position="388"/>
        <end position="665"/>
    </location>
</feature>
<feature type="domain" description="ABC transporter 2" evidence="2">
    <location>
        <begin position="721"/>
        <end position="960"/>
    </location>
</feature>
<feature type="domain" description="ABC transmembrane type-2 2">
    <location>
        <begin position="1049"/>
        <end position="1286"/>
    </location>
</feature>
<feature type="region of interest" description="Disordered" evidence="3">
    <location>
        <begin position="670"/>
        <end position="691"/>
    </location>
</feature>
<feature type="compositionally biased region" description="Basic residues" evidence="3">
    <location>
        <begin position="678"/>
        <end position="689"/>
    </location>
</feature>
<feature type="binding site" evidence="2">
    <location>
        <begin position="91"/>
        <end position="98"/>
    </location>
    <ligand>
        <name>ATP</name>
        <dbReference type="ChEBI" id="CHEBI:30616"/>
    </ligand>
</feature>
<feature type="binding site" evidence="2">
    <location>
        <begin position="755"/>
        <end position="762"/>
    </location>
    <ligand>
        <name>ATP</name>
        <dbReference type="ChEBI" id="CHEBI:30616"/>
    </ligand>
</feature>
<accession>Q9NGP5</accession>
<accession>Q553B7</accession>
<accession>Q8MXM4</accession>
<sequence length="1328" mass="149123">MAPPEIGNDEIPLQEFGQKSFAADNTIGGMQSISYDNSGAPMGLYKEKKGMYVTARNLSMSIGTEKKGDKRNILSDLNFFLKPGSMVLILGSPGCGKTSVMKALANQLHSETVSGSLLFNGKAANKSTHHRDVAYVVQGDHHMAPFTVRETFKFSADLQMSEGTSEEEKNARVDYILKTLDLTRQQDTVVGNEFLRGVSGGQKKRVTIGVEMVKDAGLFLMDEPSTGLDSTTTLELMKHFRELSNVNQVSSLVALLQPGVEVTKLFDFLMIMNAGHMVYFGPMSDAISYFEGLGFKLPKHHNPAEFFQEIVDEPELYFEGEGEPPLRGAEEFANAYKNSAMFQSIVNDLDNTQPDLTFCKDSSHLPKYPTPLSYQIRLASIRAFKMLISSQVAVRMRIIKSIVMGLILGSLFYGLDLNQTDGNNRSGLIFFSLLFIVFSGMGAIAILFEQREVFYIQKDGKYYKTFAFFLSLIFSEIPIALLETVVFCVLVYWMCGLQANAEKFIYFLLMNFVGDLAFQSFFKMVSAFAPNATLASVIAPAALAPFILFSGFMAPKRSIGGWWIWIYWISPIKYAFEGLMSNEHHGLIYSCDDSETIPPRNTPNFELPYPRGSGNSSICQITRGDQFLDQLGMPQNNWFKWIDLLIVFAFGALFSFGMYFFLKNVHVDHRASDPKNDKRSKKASKRSKKIKDSKVDIKENRMVKAQKEIPIGCYMQWKDLVYEVDVKKDGKNQRLRLLNEINGYVKPGMLLALMGPSGAGKSTLLDVLANRKTGGHTKGQILINGQERTKYFTRLSAYVEQFDVLPPTQTVKEAILFSAKTRLPSDMPNEEKIKFVENIIETLNLLKIQNKQIGHGEEGLSLSQRKRVNIGVELASDPQLLFLDEPTSGLDSSAALKVMNLIKKIASSGRSIICTIHQPSTSIFKQFDHLLLLKRGGETVYFGPTGDKSADLLGYFENHGLICDPLKNPADFILDVTDDVIETTLDGKPHQFHPVQQYKESQLNSDLLAKIDAGVMPVGTPVPEFHGVYSSSYQTQFVELGKRSWLAQVRRVQNIRTRLMRSLFLGVVLGTLFVRMEETQENIYNRVSILFFSLMFGGMSGMSSIPIVNMERGVFYREQASGMYSIPIYLFTFIVTDLPWVFLSAIIYTVPMYFISGLRLDPNGAPFFYHSFISFTTYFNFSMLAMVFATVLPTDEIAHALGGVALSISSLFAGFMIPPASIAKGWHWFYQLDPTTYPLAIVMINEFQDLEFHCTSSESVTIPNVLTVNGTYIDVGPICPITNGNQILQRYEMKPEDKYKFLAVIFGYSVFFFICIFIALKFIRHQTK</sequence>
<protein>
    <recommendedName>
        <fullName>ABC transporter G family member 2</fullName>
    </recommendedName>
    <alternativeName>
        <fullName>ABC transporter ABCG.2</fullName>
    </alternativeName>
</protein>